<sequence>MPMRKRHFYRLLPLASLLLAACTIPVSKGPATSPTSPQWRQHEQQLQQLGQFETRGAFAYLSDKQKVYARFFWQQTSPERYRLLLTNPLGSTELELVVQPGVTQLTDNQGKRYVSDDPQEMIQKLTGMSIPLESLRQWILGLPGDTSDFTLDDKYRLKKLTYQQNGVTWVVDYQEYNTQVTPSLPSRLELNQDGQRIKLKMDSWTIK</sequence>
<name>LOLB_YERPA</name>
<proteinExistence type="inferred from homology"/>
<feature type="signal peptide" evidence="1">
    <location>
        <begin position="1"/>
        <end position="21"/>
    </location>
</feature>
<feature type="chain" id="PRO_1000021695" description="Outer-membrane lipoprotein LolB">
    <location>
        <begin position="22"/>
        <end position="207"/>
    </location>
</feature>
<feature type="lipid moiety-binding region" description="N-palmitoyl cysteine" evidence="1">
    <location>
        <position position="22"/>
    </location>
</feature>
<feature type="lipid moiety-binding region" description="S-diacylglycerol cysteine" evidence="1">
    <location>
        <position position="22"/>
    </location>
</feature>
<dbReference type="EMBL" id="CP000308">
    <property type="protein sequence ID" value="ABG13366.1"/>
    <property type="molecule type" value="Genomic_DNA"/>
</dbReference>
<dbReference type="RefSeq" id="WP_002224468.1">
    <property type="nucleotide sequence ID" value="NZ_CP009906.1"/>
</dbReference>
<dbReference type="SMR" id="Q1C856"/>
<dbReference type="GeneID" id="57976646"/>
<dbReference type="KEGG" id="ypa:YPA_1399"/>
<dbReference type="Proteomes" id="UP000001971">
    <property type="component" value="Chromosome"/>
</dbReference>
<dbReference type="GO" id="GO:0009279">
    <property type="term" value="C:cell outer membrane"/>
    <property type="evidence" value="ECO:0007669"/>
    <property type="project" value="UniProtKB-SubCell"/>
</dbReference>
<dbReference type="GO" id="GO:0044874">
    <property type="term" value="P:lipoprotein localization to outer membrane"/>
    <property type="evidence" value="ECO:0007669"/>
    <property type="project" value="UniProtKB-UniRule"/>
</dbReference>
<dbReference type="GO" id="GO:0015031">
    <property type="term" value="P:protein transport"/>
    <property type="evidence" value="ECO:0007669"/>
    <property type="project" value="UniProtKB-KW"/>
</dbReference>
<dbReference type="CDD" id="cd16326">
    <property type="entry name" value="LolB"/>
    <property type="match status" value="1"/>
</dbReference>
<dbReference type="Gene3D" id="2.50.20.10">
    <property type="entry name" value="Lipoprotein localisation LolA/LolB/LppX"/>
    <property type="match status" value="1"/>
</dbReference>
<dbReference type="HAMAP" id="MF_00233">
    <property type="entry name" value="LolB"/>
    <property type="match status" value="1"/>
</dbReference>
<dbReference type="InterPro" id="IPR029046">
    <property type="entry name" value="LolA/LolB/LppX"/>
</dbReference>
<dbReference type="InterPro" id="IPR004565">
    <property type="entry name" value="OM_lipoprot_LolB"/>
</dbReference>
<dbReference type="NCBIfam" id="TIGR00548">
    <property type="entry name" value="lolB"/>
    <property type="match status" value="1"/>
</dbReference>
<dbReference type="Pfam" id="PF03550">
    <property type="entry name" value="LolB"/>
    <property type="match status" value="1"/>
</dbReference>
<dbReference type="SUPFAM" id="SSF89392">
    <property type="entry name" value="Prokaryotic lipoproteins and lipoprotein localization factors"/>
    <property type="match status" value="1"/>
</dbReference>
<dbReference type="PROSITE" id="PS51257">
    <property type="entry name" value="PROKAR_LIPOPROTEIN"/>
    <property type="match status" value="1"/>
</dbReference>
<protein>
    <recommendedName>
        <fullName evidence="1">Outer-membrane lipoprotein LolB</fullName>
    </recommendedName>
</protein>
<comment type="function">
    <text evidence="1">Plays a critical role in the incorporation of lipoproteins in the outer membrane after they are released by the LolA protein.</text>
</comment>
<comment type="subunit">
    <text evidence="1">Monomer.</text>
</comment>
<comment type="subcellular location">
    <subcellularLocation>
        <location evidence="1">Cell outer membrane</location>
        <topology evidence="1">Lipid-anchor</topology>
    </subcellularLocation>
</comment>
<comment type="similarity">
    <text evidence="1">Belongs to the LolB family.</text>
</comment>
<evidence type="ECO:0000255" key="1">
    <source>
        <dbReference type="HAMAP-Rule" id="MF_00233"/>
    </source>
</evidence>
<accession>Q1C856</accession>
<reference key="1">
    <citation type="journal article" date="2006" name="J. Bacteriol.">
        <title>Complete genome sequence of Yersinia pestis strains Antiqua and Nepal516: evidence of gene reduction in an emerging pathogen.</title>
        <authorList>
            <person name="Chain P.S.G."/>
            <person name="Hu P."/>
            <person name="Malfatti S.A."/>
            <person name="Radnedge L."/>
            <person name="Larimer F."/>
            <person name="Vergez L.M."/>
            <person name="Worsham P."/>
            <person name="Chu M.C."/>
            <person name="Andersen G.L."/>
        </authorList>
    </citation>
    <scope>NUCLEOTIDE SEQUENCE [LARGE SCALE GENOMIC DNA]</scope>
    <source>
        <strain>Antiqua</strain>
    </source>
</reference>
<gene>
    <name evidence="1" type="primary">lolB</name>
    <name type="ordered locus">YPA_1399</name>
</gene>
<keyword id="KW-0998">Cell outer membrane</keyword>
<keyword id="KW-0143">Chaperone</keyword>
<keyword id="KW-0449">Lipoprotein</keyword>
<keyword id="KW-0472">Membrane</keyword>
<keyword id="KW-0564">Palmitate</keyword>
<keyword id="KW-0653">Protein transport</keyword>
<keyword id="KW-0732">Signal</keyword>
<keyword id="KW-0813">Transport</keyword>
<organism>
    <name type="scientific">Yersinia pestis bv. Antiqua (strain Antiqua)</name>
    <dbReference type="NCBI Taxonomy" id="360102"/>
    <lineage>
        <taxon>Bacteria</taxon>
        <taxon>Pseudomonadati</taxon>
        <taxon>Pseudomonadota</taxon>
        <taxon>Gammaproteobacteria</taxon>
        <taxon>Enterobacterales</taxon>
        <taxon>Yersiniaceae</taxon>
        <taxon>Yersinia</taxon>
    </lineage>
</organism>